<name>NOP58_AJECN</name>
<dbReference type="EMBL" id="CH476656">
    <property type="protein sequence ID" value="EDN05832.1"/>
    <property type="molecule type" value="Genomic_DNA"/>
</dbReference>
<dbReference type="SMR" id="A6QYH8"/>
<dbReference type="STRING" id="339724.A6QYH8"/>
<dbReference type="KEGG" id="aje:HCAG_02435"/>
<dbReference type="VEuPathDB" id="FungiDB:HCAG_02435"/>
<dbReference type="HOGENOM" id="CLU_015495_5_0_1"/>
<dbReference type="OMA" id="MGMRSNW"/>
<dbReference type="OrthoDB" id="11869at299071"/>
<dbReference type="Proteomes" id="UP000009297">
    <property type="component" value="Unassembled WGS sequence"/>
</dbReference>
<dbReference type="GO" id="GO:0031428">
    <property type="term" value="C:box C/D methylation guide snoRNP complex"/>
    <property type="evidence" value="ECO:0007669"/>
    <property type="project" value="InterPro"/>
</dbReference>
<dbReference type="GO" id="GO:0005730">
    <property type="term" value="C:nucleolus"/>
    <property type="evidence" value="ECO:0007669"/>
    <property type="project" value="UniProtKB-SubCell"/>
</dbReference>
<dbReference type="GO" id="GO:0032040">
    <property type="term" value="C:small-subunit processome"/>
    <property type="evidence" value="ECO:0007669"/>
    <property type="project" value="InterPro"/>
</dbReference>
<dbReference type="GO" id="GO:0030515">
    <property type="term" value="F:snoRNA binding"/>
    <property type="evidence" value="ECO:0007669"/>
    <property type="project" value="InterPro"/>
</dbReference>
<dbReference type="GO" id="GO:0006364">
    <property type="term" value="P:rRNA processing"/>
    <property type="evidence" value="ECO:0007669"/>
    <property type="project" value="UniProtKB-KW"/>
</dbReference>
<dbReference type="FunFam" id="1.10.246.90:FF:000003">
    <property type="entry name" value="Nucleolar protein 58"/>
    <property type="match status" value="1"/>
</dbReference>
<dbReference type="FunFam" id="1.10.287.4070:FF:000001">
    <property type="entry name" value="Probable Nucleolar protein 58"/>
    <property type="match status" value="1"/>
</dbReference>
<dbReference type="Gene3D" id="1.10.287.4070">
    <property type="match status" value="1"/>
</dbReference>
<dbReference type="Gene3D" id="1.10.246.90">
    <property type="entry name" value="Nop domain"/>
    <property type="match status" value="1"/>
</dbReference>
<dbReference type="InterPro" id="IPR045056">
    <property type="entry name" value="Nop56/Nop58"/>
</dbReference>
<dbReference type="InterPro" id="IPR012974">
    <property type="entry name" value="NOP58/56_N"/>
</dbReference>
<dbReference type="InterPro" id="IPR042239">
    <property type="entry name" value="Nop_C"/>
</dbReference>
<dbReference type="InterPro" id="IPR002687">
    <property type="entry name" value="Nop_dom"/>
</dbReference>
<dbReference type="InterPro" id="IPR036070">
    <property type="entry name" value="Nop_dom_sf"/>
</dbReference>
<dbReference type="InterPro" id="IPR012976">
    <property type="entry name" value="NOSIC"/>
</dbReference>
<dbReference type="PANTHER" id="PTHR10894">
    <property type="entry name" value="NUCLEOLAR PROTEIN 5 NUCLEOLAR PROTEIN NOP5 NOP58"/>
    <property type="match status" value="1"/>
</dbReference>
<dbReference type="PANTHER" id="PTHR10894:SF1">
    <property type="entry name" value="NUCLEOLAR PROTEIN 58"/>
    <property type="match status" value="1"/>
</dbReference>
<dbReference type="Pfam" id="PF01798">
    <property type="entry name" value="Nop"/>
    <property type="match status" value="1"/>
</dbReference>
<dbReference type="Pfam" id="PF08156">
    <property type="entry name" value="NOP5NT"/>
    <property type="match status" value="1"/>
</dbReference>
<dbReference type="SMART" id="SM00931">
    <property type="entry name" value="NOSIC"/>
    <property type="match status" value="1"/>
</dbReference>
<dbReference type="SUPFAM" id="SSF89124">
    <property type="entry name" value="Nop domain"/>
    <property type="match status" value="1"/>
</dbReference>
<dbReference type="PROSITE" id="PS51358">
    <property type="entry name" value="NOP"/>
    <property type="match status" value="1"/>
</dbReference>
<proteinExistence type="inferred from homology"/>
<accession>A6QYH8</accession>
<keyword id="KW-0539">Nucleus</keyword>
<keyword id="KW-1185">Reference proteome</keyword>
<keyword id="KW-0687">Ribonucleoprotein</keyword>
<keyword id="KW-0690">Ribosome biogenesis</keyword>
<keyword id="KW-0698">rRNA processing</keyword>
<sequence>MTLFILAETSAGYALLKAKDKKLLKRHDIVAETQTAEGVSNLMKLKNFQKFDSAATALEETASLVEGKVTPRLANLLESIKDEKKVSLAVADPKLGNAIAKLPLAIQPIADSTTTDLYRAIREHLPTLIPGLLPGDMSTMSLGLSHSLARHKLKFSPDKIDTMIVQAIALLDDLDKELNTYAMRVKEWYGWHFPELAKILNDNIAYSKVVLKVGMRSNFGETDLAEILPEEIEAVVKAAADRSMGTEISNEDLDNIQALAEEVIGFSTYRQQLASYLAARMTAIAPNLTALVGELVGARLIAHAGSLVNLSKSPASTIQILGAEKALFRALKTKHDTPKYGLIYHASLIGQATGKNKGKMARYLAAKAAIGLRVDALTDWPVDADGNEPTEEEKAALGMQSRYYLEKKLAAMEGKPIKPRGVGIAPNGIPTAQPKKWEINEARKYNPDADGFAGDEDLAESSPKKQKKEKKDKKKKLVEEIKESEDGSESEEESDEDVEMADKSATNGSMADANASSEERSDREEKSKKSKEKSLEKKSKKEDKKSKKQKSGSGPSVEEMAAKAGLSVSRYQRKLERGEIVFDSEGNPSYISKKDLKKAKKEAKKAAKAAEKEAGKKRKRAEEDDEKKTKKKSKV</sequence>
<comment type="function">
    <text evidence="1">Required for pre-18S rRNA processing. May bind microtubules (By similarity).</text>
</comment>
<comment type="subcellular location">
    <subcellularLocation>
        <location evidence="1">Nucleus</location>
        <location evidence="1">Nucleolus</location>
    </subcellularLocation>
</comment>
<comment type="similarity">
    <text evidence="4">Belongs to the NOP5/NOP56 family.</text>
</comment>
<gene>
    <name type="primary">NOP58</name>
    <name type="ORF">HCAG_02435</name>
</gene>
<feature type="chain" id="PRO_0000350971" description="Nucleolar protein 58">
    <location>
        <begin position="1"/>
        <end position="635"/>
    </location>
</feature>
<feature type="domain" description="Nop" evidence="2">
    <location>
        <begin position="284"/>
        <end position="414"/>
    </location>
</feature>
<feature type="region of interest" description="Disordered" evidence="3">
    <location>
        <begin position="445"/>
        <end position="635"/>
    </location>
</feature>
<feature type="compositionally biased region" description="Basic residues" evidence="3">
    <location>
        <begin position="464"/>
        <end position="476"/>
    </location>
</feature>
<feature type="compositionally biased region" description="Acidic residues" evidence="3">
    <location>
        <begin position="486"/>
        <end position="499"/>
    </location>
</feature>
<feature type="compositionally biased region" description="Basic and acidic residues" evidence="3">
    <location>
        <begin position="517"/>
        <end position="545"/>
    </location>
</feature>
<feature type="compositionally biased region" description="Basic and acidic residues" evidence="3">
    <location>
        <begin position="604"/>
        <end position="628"/>
    </location>
</feature>
<protein>
    <recommendedName>
        <fullName>Nucleolar protein 58</fullName>
    </recommendedName>
</protein>
<organism>
    <name type="scientific">Ajellomyces capsulatus (strain NAm1 / WU24)</name>
    <name type="common">Darling's disease fungus</name>
    <name type="synonym">Histoplasma capsulatum</name>
    <dbReference type="NCBI Taxonomy" id="2059318"/>
    <lineage>
        <taxon>Eukaryota</taxon>
        <taxon>Fungi</taxon>
        <taxon>Dikarya</taxon>
        <taxon>Ascomycota</taxon>
        <taxon>Pezizomycotina</taxon>
        <taxon>Eurotiomycetes</taxon>
        <taxon>Eurotiomycetidae</taxon>
        <taxon>Onygenales</taxon>
        <taxon>Ajellomycetaceae</taxon>
        <taxon>Histoplasma</taxon>
    </lineage>
</organism>
<reference key="1">
    <citation type="journal article" date="2009" name="Genome Res.">
        <title>Comparative genomic analyses of the human fungal pathogens Coccidioides and their relatives.</title>
        <authorList>
            <person name="Sharpton T.J."/>
            <person name="Stajich J.E."/>
            <person name="Rounsley S.D."/>
            <person name="Gardner M.J."/>
            <person name="Wortman J.R."/>
            <person name="Jordar V.S."/>
            <person name="Maiti R."/>
            <person name="Kodira C.D."/>
            <person name="Neafsey D.E."/>
            <person name="Zeng Q."/>
            <person name="Hung C.-Y."/>
            <person name="McMahan C."/>
            <person name="Muszewska A."/>
            <person name="Grynberg M."/>
            <person name="Mandel M.A."/>
            <person name="Kellner E.M."/>
            <person name="Barker B.M."/>
            <person name="Galgiani J.N."/>
            <person name="Orbach M.J."/>
            <person name="Kirkland T.N."/>
            <person name="Cole G.T."/>
            <person name="Henn M.R."/>
            <person name="Birren B.W."/>
            <person name="Taylor J.W."/>
        </authorList>
    </citation>
    <scope>NUCLEOTIDE SEQUENCE [LARGE SCALE GENOMIC DNA]</scope>
    <source>
        <strain>NAm1 / WU24</strain>
    </source>
</reference>
<evidence type="ECO:0000250" key="1"/>
<evidence type="ECO:0000255" key="2">
    <source>
        <dbReference type="PROSITE-ProRule" id="PRU00690"/>
    </source>
</evidence>
<evidence type="ECO:0000256" key="3">
    <source>
        <dbReference type="SAM" id="MobiDB-lite"/>
    </source>
</evidence>
<evidence type="ECO:0000305" key="4"/>